<protein>
    <recommendedName>
        <fullName evidence="1">Alanine racemase</fullName>
        <ecNumber evidence="1">5.1.1.1</ecNumber>
    </recommendedName>
</protein>
<evidence type="ECO:0000255" key="1">
    <source>
        <dbReference type="HAMAP-Rule" id="MF_01201"/>
    </source>
</evidence>
<evidence type="ECO:0000305" key="2"/>
<sequence length="362" mass="39237">MRPAHAVIDLDALRHNYRFARRLGGGKALAVVKADAYGHGAVRCAQALEAEVDGFAVACIEEALELRQAGIQAPILLLEGFFEAEELELIAKHNLWTVIASSWQVRALAAFHSPSPIGVWLKLDSGMHRLGLEPKEFRDAWMSLHRLPQVGEIVLMTHLARADELDNPRTNEQASVFAQASQGMVAPASVCNSSGLLGWAGLYSDWGRPGLMLYGVNPIPQESTSLSGPLRPVMMVYSRLIAVHELPAGEPVGYGACFVTERPTRVGVVAMGYADGYPYFAVNGTPLLVDGRVCPLIGRVSMDMLTVDLTDHPQADVGSQVQLWGVQPGVAELAAHCNLSAYQLLCGLKRVRRYYLGEMGAV</sequence>
<accession>Q9PF26</accession>
<dbReference type="EC" id="5.1.1.1" evidence="1"/>
<dbReference type="EMBL" id="AE003849">
    <property type="protein sequence ID" value="AAF83662.1"/>
    <property type="status" value="ALT_INIT"/>
    <property type="molecule type" value="Genomic_DNA"/>
</dbReference>
<dbReference type="PIR" id="F82753">
    <property type="entry name" value="F82753"/>
</dbReference>
<dbReference type="RefSeq" id="WP_031337060.1">
    <property type="nucleotide sequence ID" value="NC_002488.3"/>
</dbReference>
<dbReference type="SMR" id="Q9PF26"/>
<dbReference type="STRING" id="160492.XF_0852"/>
<dbReference type="KEGG" id="xfa:XF_0852"/>
<dbReference type="eggNOG" id="COG0787">
    <property type="taxonomic scope" value="Bacteria"/>
</dbReference>
<dbReference type="HOGENOM" id="CLU_028393_1_0_6"/>
<dbReference type="UniPathway" id="UPA00042">
    <property type="reaction ID" value="UER00497"/>
</dbReference>
<dbReference type="Proteomes" id="UP000000812">
    <property type="component" value="Chromosome"/>
</dbReference>
<dbReference type="GO" id="GO:0005829">
    <property type="term" value="C:cytosol"/>
    <property type="evidence" value="ECO:0007669"/>
    <property type="project" value="TreeGrafter"/>
</dbReference>
<dbReference type="GO" id="GO:0008784">
    <property type="term" value="F:alanine racemase activity"/>
    <property type="evidence" value="ECO:0007669"/>
    <property type="project" value="UniProtKB-UniRule"/>
</dbReference>
<dbReference type="GO" id="GO:0030170">
    <property type="term" value="F:pyridoxal phosphate binding"/>
    <property type="evidence" value="ECO:0007669"/>
    <property type="project" value="UniProtKB-UniRule"/>
</dbReference>
<dbReference type="GO" id="GO:0030632">
    <property type="term" value="P:D-alanine biosynthetic process"/>
    <property type="evidence" value="ECO:0007669"/>
    <property type="project" value="UniProtKB-UniRule"/>
</dbReference>
<dbReference type="CDD" id="cd06827">
    <property type="entry name" value="PLPDE_III_AR_proteobact"/>
    <property type="match status" value="1"/>
</dbReference>
<dbReference type="FunFam" id="3.20.20.10:FF:000002">
    <property type="entry name" value="Alanine racemase"/>
    <property type="match status" value="1"/>
</dbReference>
<dbReference type="Gene3D" id="3.20.20.10">
    <property type="entry name" value="Alanine racemase"/>
    <property type="match status" value="1"/>
</dbReference>
<dbReference type="Gene3D" id="2.40.37.10">
    <property type="entry name" value="Lyase, Ornithine Decarboxylase, Chain A, domain 1"/>
    <property type="match status" value="1"/>
</dbReference>
<dbReference type="HAMAP" id="MF_01201">
    <property type="entry name" value="Ala_racemase"/>
    <property type="match status" value="1"/>
</dbReference>
<dbReference type="InterPro" id="IPR000821">
    <property type="entry name" value="Ala_racemase"/>
</dbReference>
<dbReference type="InterPro" id="IPR009006">
    <property type="entry name" value="Ala_racemase/Decarboxylase_C"/>
</dbReference>
<dbReference type="InterPro" id="IPR011079">
    <property type="entry name" value="Ala_racemase_C"/>
</dbReference>
<dbReference type="InterPro" id="IPR001608">
    <property type="entry name" value="Ala_racemase_N"/>
</dbReference>
<dbReference type="InterPro" id="IPR020622">
    <property type="entry name" value="Ala_racemase_pyridoxalP-BS"/>
</dbReference>
<dbReference type="InterPro" id="IPR029066">
    <property type="entry name" value="PLP-binding_barrel"/>
</dbReference>
<dbReference type="NCBIfam" id="TIGR00492">
    <property type="entry name" value="alr"/>
    <property type="match status" value="1"/>
</dbReference>
<dbReference type="PANTHER" id="PTHR30511">
    <property type="entry name" value="ALANINE RACEMASE"/>
    <property type="match status" value="1"/>
</dbReference>
<dbReference type="PANTHER" id="PTHR30511:SF0">
    <property type="entry name" value="ALANINE RACEMASE, CATABOLIC-RELATED"/>
    <property type="match status" value="1"/>
</dbReference>
<dbReference type="Pfam" id="PF00842">
    <property type="entry name" value="Ala_racemase_C"/>
    <property type="match status" value="1"/>
</dbReference>
<dbReference type="Pfam" id="PF01168">
    <property type="entry name" value="Ala_racemase_N"/>
    <property type="match status" value="1"/>
</dbReference>
<dbReference type="PRINTS" id="PR00992">
    <property type="entry name" value="ALARACEMASE"/>
</dbReference>
<dbReference type="SMART" id="SM01005">
    <property type="entry name" value="Ala_racemase_C"/>
    <property type="match status" value="1"/>
</dbReference>
<dbReference type="SUPFAM" id="SSF50621">
    <property type="entry name" value="Alanine racemase C-terminal domain-like"/>
    <property type="match status" value="1"/>
</dbReference>
<dbReference type="SUPFAM" id="SSF51419">
    <property type="entry name" value="PLP-binding barrel"/>
    <property type="match status" value="1"/>
</dbReference>
<dbReference type="PROSITE" id="PS00395">
    <property type="entry name" value="ALANINE_RACEMASE"/>
    <property type="match status" value="1"/>
</dbReference>
<name>ALR_XYLFA</name>
<comment type="function">
    <text evidence="1">Catalyzes the interconversion of L-alanine and D-alanine. May also act on other amino acids.</text>
</comment>
<comment type="catalytic activity">
    <reaction evidence="1">
        <text>L-alanine = D-alanine</text>
        <dbReference type="Rhea" id="RHEA:20249"/>
        <dbReference type="ChEBI" id="CHEBI:57416"/>
        <dbReference type="ChEBI" id="CHEBI:57972"/>
        <dbReference type="EC" id="5.1.1.1"/>
    </reaction>
</comment>
<comment type="cofactor">
    <cofactor evidence="1">
        <name>pyridoxal 5'-phosphate</name>
        <dbReference type="ChEBI" id="CHEBI:597326"/>
    </cofactor>
</comment>
<comment type="pathway">
    <text evidence="1">Amino-acid biosynthesis; D-alanine biosynthesis; D-alanine from L-alanine: step 1/1.</text>
</comment>
<comment type="similarity">
    <text evidence="1">Belongs to the alanine racemase family.</text>
</comment>
<comment type="sequence caution" evidence="2">
    <conflict type="erroneous initiation">
        <sequence resource="EMBL-CDS" id="AAF83662"/>
    </conflict>
</comment>
<organism>
    <name type="scientific">Xylella fastidiosa (strain 9a5c)</name>
    <dbReference type="NCBI Taxonomy" id="160492"/>
    <lineage>
        <taxon>Bacteria</taxon>
        <taxon>Pseudomonadati</taxon>
        <taxon>Pseudomonadota</taxon>
        <taxon>Gammaproteobacteria</taxon>
        <taxon>Lysobacterales</taxon>
        <taxon>Lysobacteraceae</taxon>
        <taxon>Xylella</taxon>
    </lineage>
</organism>
<proteinExistence type="inferred from homology"/>
<gene>
    <name type="primary">alr</name>
    <name type="ordered locus">XF_0852</name>
</gene>
<feature type="chain" id="PRO_0000114600" description="Alanine racemase">
    <location>
        <begin position="1"/>
        <end position="362"/>
    </location>
</feature>
<feature type="active site" description="Proton acceptor; specific for D-alanine" evidence="1">
    <location>
        <position position="33"/>
    </location>
</feature>
<feature type="active site" description="Proton acceptor; specific for L-alanine" evidence="1">
    <location>
        <position position="254"/>
    </location>
</feature>
<feature type="binding site" evidence="1">
    <location>
        <position position="129"/>
    </location>
    <ligand>
        <name>substrate</name>
    </ligand>
</feature>
<feature type="binding site" evidence="1">
    <location>
        <position position="302"/>
    </location>
    <ligand>
        <name>substrate</name>
    </ligand>
</feature>
<feature type="modified residue" description="N6-(pyridoxal phosphate)lysine" evidence="1">
    <location>
        <position position="33"/>
    </location>
</feature>
<keyword id="KW-0413">Isomerase</keyword>
<keyword id="KW-0663">Pyridoxal phosphate</keyword>
<reference key="1">
    <citation type="journal article" date="2000" name="Nature">
        <title>The genome sequence of the plant pathogen Xylella fastidiosa.</title>
        <authorList>
            <person name="Simpson A.J.G."/>
            <person name="Reinach F.C."/>
            <person name="Arruda P."/>
            <person name="Abreu F.A."/>
            <person name="Acencio M."/>
            <person name="Alvarenga R."/>
            <person name="Alves L.M.C."/>
            <person name="Araya J.E."/>
            <person name="Baia G.S."/>
            <person name="Baptista C.S."/>
            <person name="Barros M.H."/>
            <person name="Bonaccorsi E.D."/>
            <person name="Bordin S."/>
            <person name="Bove J.M."/>
            <person name="Briones M.R.S."/>
            <person name="Bueno M.R.P."/>
            <person name="Camargo A.A."/>
            <person name="Camargo L.E.A."/>
            <person name="Carraro D.M."/>
            <person name="Carrer H."/>
            <person name="Colauto N.B."/>
            <person name="Colombo C."/>
            <person name="Costa F.F."/>
            <person name="Costa M.C.R."/>
            <person name="Costa-Neto C.M."/>
            <person name="Coutinho L.L."/>
            <person name="Cristofani M."/>
            <person name="Dias-Neto E."/>
            <person name="Docena C."/>
            <person name="El-Dorry H."/>
            <person name="Facincani A.P."/>
            <person name="Ferreira A.J.S."/>
            <person name="Ferreira V.C.A."/>
            <person name="Ferro J.A."/>
            <person name="Fraga J.S."/>
            <person name="Franca S.C."/>
            <person name="Franco M.C."/>
            <person name="Frohme M."/>
            <person name="Furlan L.R."/>
            <person name="Garnier M."/>
            <person name="Goldman G.H."/>
            <person name="Goldman M.H.S."/>
            <person name="Gomes S.L."/>
            <person name="Gruber A."/>
            <person name="Ho P.L."/>
            <person name="Hoheisel J.D."/>
            <person name="Junqueira M.L."/>
            <person name="Kemper E.L."/>
            <person name="Kitajima J.P."/>
            <person name="Krieger J.E."/>
            <person name="Kuramae E.E."/>
            <person name="Laigret F."/>
            <person name="Lambais M.R."/>
            <person name="Leite L.C.C."/>
            <person name="Lemos E.G.M."/>
            <person name="Lemos M.V.F."/>
            <person name="Lopes S.A."/>
            <person name="Lopes C.R."/>
            <person name="Machado J.A."/>
            <person name="Machado M.A."/>
            <person name="Madeira A.M.B.N."/>
            <person name="Madeira H.M.F."/>
            <person name="Marino C.L."/>
            <person name="Marques M.V."/>
            <person name="Martins E.A.L."/>
            <person name="Martins E.M.F."/>
            <person name="Matsukuma A.Y."/>
            <person name="Menck C.F.M."/>
            <person name="Miracca E.C."/>
            <person name="Miyaki C.Y."/>
            <person name="Monteiro-Vitorello C.B."/>
            <person name="Moon D.H."/>
            <person name="Nagai M.A."/>
            <person name="Nascimento A.L.T.O."/>
            <person name="Netto L.E.S."/>
            <person name="Nhani A. Jr."/>
            <person name="Nobrega F.G."/>
            <person name="Nunes L.R."/>
            <person name="Oliveira M.A."/>
            <person name="de Oliveira M.C."/>
            <person name="de Oliveira R.C."/>
            <person name="Palmieri D.A."/>
            <person name="Paris A."/>
            <person name="Peixoto B.R."/>
            <person name="Pereira G.A.G."/>
            <person name="Pereira H.A. Jr."/>
            <person name="Pesquero J.B."/>
            <person name="Quaggio R.B."/>
            <person name="Roberto P.G."/>
            <person name="Rodrigues V."/>
            <person name="de Rosa A.J.M."/>
            <person name="de Rosa V.E. Jr."/>
            <person name="de Sa R.G."/>
            <person name="Santelli R.V."/>
            <person name="Sawasaki H.E."/>
            <person name="da Silva A.C.R."/>
            <person name="da Silva A.M."/>
            <person name="da Silva F.R."/>
            <person name="Silva W.A. Jr."/>
            <person name="da Silveira J.F."/>
            <person name="Silvestri M.L.Z."/>
            <person name="Siqueira W.J."/>
            <person name="de Souza A.A."/>
            <person name="de Souza A.P."/>
            <person name="Terenzi M.F."/>
            <person name="Truffi D."/>
            <person name="Tsai S.M."/>
            <person name="Tsuhako M.H."/>
            <person name="Vallada H."/>
            <person name="Van Sluys M.A."/>
            <person name="Verjovski-Almeida S."/>
            <person name="Vettore A.L."/>
            <person name="Zago M.A."/>
            <person name="Zatz M."/>
            <person name="Meidanis J."/>
            <person name="Setubal J.C."/>
        </authorList>
    </citation>
    <scope>NUCLEOTIDE SEQUENCE [LARGE SCALE GENOMIC DNA]</scope>
    <source>
        <strain>9a5c</strain>
    </source>
</reference>